<organism>
    <name type="scientific">Rhodopseudomonas palustris (strain TIE-1)</name>
    <dbReference type="NCBI Taxonomy" id="395960"/>
    <lineage>
        <taxon>Bacteria</taxon>
        <taxon>Pseudomonadati</taxon>
        <taxon>Pseudomonadota</taxon>
        <taxon>Alphaproteobacteria</taxon>
        <taxon>Hyphomicrobiales</taxon>
        <taxon>Nitrobacteraceae</taxon>
        <taxon>Rhodopseudomonas</taxon>
    </lineage>
</organism>
<name>RL4_RHOPT</name>
<proteinExistence type="inferred from homology"/>
<sequence>MELKVTTLEGKEAGSVQLSDEIFGLEPRSDIIQRCVIWQLAKRQAGTHKAKGRAEVWRTGKKMYKQKGTGGARHGSQRVPQFRGGGRAFGPVVRSHAIDLPKKVRVLALRHALSAKAKGGGLIVLDKAELEAAKTKTLVGHFSGLGLESALIIDGAEVNNGFAAAARNIPNIDVLPVQGINVYDILRRKKLVLTKAAVDALEARFK</sequence>
<comment type="function">
    <text evidence="1">One of the primary rRNA binding proteins, this protein initially binds near the 5'-end of the 23S rRNA. It is important during the early stages of 50S assembly. It makes multiple contacts with different domains of the 23S rRNA in the assembled 50S subunit and ribosome.</text>
</comment>
<comment type="function">
    <text evidence="1">Forms part of the polypeptide exit tunnel.</text>
</comment>
<comment type="subunit">
    <text evidence="1">Part of the 50S ribosomal subunit.</text>
</comment>
<comment type="similarity">
    <text evidence="1">Belongs to the universal ribosomal protein uL4 family.</text>
</comment>
<evidence type="ECO:0000255" key="1">
    <source>
        <dbReference type="HAMAP-Rule" id="MF_01328"/>
    </source>
</evidence>
<evidence type="ECO:0000305" key="2"/>
<protein>
    <recommendedName>
        <fullName evidence="1">Large ribosomal subunit protein uL4</fullName>
    </recommendedName>
    <alternativeName>
        <fullName evidence="2">50S ribosomal protein L4</fullName>
    </alternativeName>
</protein>
<feature type="chain" id="PRO_1000142177" description="Large ribosomal subunit protein uL4">
    <location>
        <begin position="1"/>
        <end position="206"/>
    </location>
</feature>
<keyword id="KW-0687">Ribonucleoprotein</keyword>
<keyword id="KW-0689">Ribosomal protein</keyword>
<keyword id="KW-0694">RNA-binding</keyword>
<keyword id="KW-0699">rRNA-binding</keyword>
<gene>
    <name evidence="1" type="primary">rplD</name>
    <name type="ordered locus">Rpal_3666</name>
</gene>
<reference key="1">
    <citation type="submission" date="2008-05" db="EMBL/GenBank/DDBJ databases">
        <title>Complete sequence of Rhodopseudomonas palustris TIE-1.</title>
        <authorList>
            <consortium name="US DOE Joint Genome Institute"/>
            <person name="Lucas S."/>
            <person name="Copeland A."/>
            <person name="Lapidus A."/>
            <person name="Glavina del Rio T."/>
            <person name="Dalin E."/>
            <person name="Tice H."/>
            <person name="Pitluck S."/>
            <person name="Chain P."/>
            <person name="Malfatti S."/>
            <person name="Shin M."/>
            <person name="Vergez L."/>
            <person name="Lang D."/>
            <person name="Schmutz J."/>
            <person name="Larimer F."/>
            <person name="Land M."/>
            <person name="Hauser L."/>
            <person name="Kyrpides N."/>
            <person name="Mikhailova N."/>
            <person name="Emerson D."/>
            <person name="Newman D.K."/>
            <person name="Roden E."/>
            <person name="Richardson P."/>
        </authorList>
    </citation>
    <scope>NUCLEOTIDE SEQUENCE [LARGE SCALE GENOMIC DNA]</scope>
    <source>
        <strain>TIE-1</strain>
    </source>
</reference>
<dbReference type="EMBL" id="CP001096">
    <property type="protein sequence ID" value="ACF02166.1"/>
    <property type="molecule type" value="Genomic_DNA"/>
</dbReference>
<dbReference type="RefSeq" id="WP_011158794.1">
    <property type="nucleotide sequence ID" value="NC_011004.1"/>
</dbReference>
<dbReference type="SMR" id="B3QBX9"/>
<dbReference type="GeneID" id="66894335"/>
<dbReference type="KEGG" id="rpt:Rpal_3666"/>
<dbReference type="HOGENOM" id="CLU_041575_5_1_5"/>
<dbReference type="OrthoDB" id="9803201at2"/>
<dbReference type="Proteomes" id="UP000001725">
    <property type="component" value="Chromosome"/>
</dbReference>
<dbReference type="GO" id="GO:1990904">
    <property type="term" value="C:ribonucleoprotein complex"/>
    <property type="evidence" value="ECO:0007669"/>
    <property type="project" value="UniProtKB-KW"/>
</dbReference>
<dbReference type="GO" id="GO:0005840">
    <property type="term" value="C:ribosome"/>
    <property type="evidence" value="ECO:0007669"/>
    <property type="project" value="UniProtKB-KW"/>
</dbReference>
<dbReference type="GO" id="GO:0019843">
    <property type="term" value="F:rRNA binding"/>
    <property type="evidence" value="ECO:0007669"/>
    <property type="project" value="UniProtKB-UniRule"/>
</dbReference>
<dbReference type="GO" id="GO:0003735">
    <property type="term" value="F:structural constituent of ribosome"/>
    <property type="evidence" value="ECO:0007669"/>
    <property type="project" value="InterPro"/>
</dbReference>
<dbReference type="GO" id="GO:0006412">
    <property type="term" value="P:translation"/>
    <property type="evidence" value="ECO:0007669"/>
    <property type="project" value="UniProtKB-UniRule"/>
</dbReference>
<dbReference type="Gene3D" id="3.40.1370.10">
    <property type="match status" value="1"/>
</dbReference>
<dbReference type="HAMAP" id="MF_01328_B">
    <property type="entry name" value="Ribosomal_uL4_B"/>
    <property type="match status" value="1"/>
</dbReference>
<dbReference type="InterPro" id="IPR002136">
    <property type="entry name" value="Ribosomal_uL4"/>
</dbReference>
<dbReference type="InterPro" id="IPR013005">
    <property type="entry name" value="Ribosomal_uL4-like"/>
</dbReference>
<dbReference type="InterPro" id="IPR023574">
    <property type="entry name" value="Ribosomal_uL4_dom_sf"/>
</dbReference>
<dbReference type="NCBIfam" id="TIGR03953">
    <property type="entry name" value="rplD_bact"/>
    <property type="match status" value="1"/>
</dbReference>
<dbReference type="PANTHER" id="PTHR10746">
    <property type="entry name" value="50S RIBOSOMAL PROTEIN L4"/>
    <property type="match status" value="1"/>
</dbReference>
<dbReference type="PANTHER" id="PTHR10746:SF6">
    <property type="entry name" value="LARGE RIBOSOMAL SUBUNIT PROTEIN UL4M"/>
    <property type="match status" value="1"/>
</dbReference>
<dbReference type="Pfam" id="PF00573">
    <property type="entry name" value="Ribosomal_L4"/>
    <property type="match status" value="1"/>
</dbReference>
<dbReference type="SUPFAM" id="SSF52166">
    <property type="entry name" value="Ribosomal protein L4"/>
    <property type="match status" value="1"/>
</dbReference>
<accession>B3QBX9</accession>